<comment type="function">
    <text evidence="1">Catalyzes the attachment of L-aspartate to tRNA(Asp) in a two-step reaction: L-aspartate is first activated by ATP to form Asp-AMP and then transferred to the acceptor end of tRNA(Asp).</text>
</comment>
<comment type="catalytic activity">
    <reaction evidence="1">
        <text>tRNA(Asp) + L-aspartate + ATP = L-aspartyl-tRNA(Asp) + AMP + diphosphate</text>
        <dbReference type="Rhea" id="RHEA:19649"/>
        <dbReference type="Rhea" id="RHEA-COMP:9660"/>
        <dbReference type="Rhea" id="RHEA-COMP:9678"/>
        <dbReference type="ChEBI" id="CHEBI:29991"/>
        <dbReference type="ChEBI" id="CHEBI:30616"/>
        <dbReference type="ChEBI" id="CHEBI:33019"/>
        <dbReference type="ChEBI" id="CHEBI:78442"/>
        <dbReference type="ChEBI" id="CHEBI:78516"/>
        <dbReference type="ChEBI" id="CHEBI:456215"/>
        <dbReference type="EC" id="6.1.1.12"/>
    </reaction>
</comment>
<comment type="subunit">
    <text evidence="1">Homodimer.</text>
</comment>
<comment type="subcellular location">
    <subcellularLocation>
        <location evidence="1">Cytoplasm</location>
    </subcellularLocation>
</comment>
<comment type="similarity">
    <text evidence="1">Belongs to the class-II aminoacyl-tRNA synthetase family. Type 1 subfamily.</text>
</comment>
<evidence type="ECO:0000255" key="1">
    <source>
        <dbReference type="HAMAP-Rule" id="MF_00044"/>
    </source>
</evidence>
<protein>
    <recommendedName>
        <fullName evidence="1">Aspartate--tRNA ligase</fullName>
        <ecNumber evidence="1">6.1.1.12</ecNumber>
    </recommendedName>
    <alternativeName>
        <fullName evidence="1">Aspartyl-tRNA synthetase</fullName>
        <shortName evidence="1">AspRS</shortName>
    </alternativeName>
</protein>
<gene>
    <name evidence="1" type="primary">aspS</name>
    <name type="ordered locus">SPT_2122</name>
</gene>
<proteinExistence type="inferred from homology"/>
<dbReference type="EC" id="6.1.1.12" evidence="1"/>
<dbReference type="EMBL" id="CP000921">
    <property type="protein sequence ID" value="ACO23330.1"/>
    <property type="molecule type" value="Genomic_DNA"/>
</dbReference>
<dbReference type="RefSeq" id="WP_000830890.1">
    <property type="nucleotide sequence ID" value="NC_012469.1"/>
</dbReference>
<dbReference type="SMR" id="C1CU16"/>
<dbReference type="KEGG" id="snt:SPT_2122"/>
<dbReference type="HOGENOM" id="CLU_014330_3_2_9"/>
<dbReference type="GO" id="GO:0005737">
    <property type="term" value="C:cytoplasm"/>
    <property type="evidence" value="ECO:0007669"/>
    <property type="project" value="UniProtKB-SubCell"/>
</dbReference>
<dbReference type="GO" id="GO:0004815">
    <property type="term" value="F:aspartate-tRNA ligase activity"/>
    <property type="evidence" value="ECO:0007669"/>
    <property type="project" value="UniProtKB-UniRule"/>
</dbReference>
<dbReference type="GO" id="GO:0005524">
    <property type="term" value="F:ATP binding"/>
    <property type="evidence" value="ECO:0007669"/>
    <property type="project" value="UniProtKB-UniRule"/>
</dbReference>
<dbReference type="GO" id="GO:0140096">
    <property type="term" value="F:catalytic activity, acting on a protein"/>
    <property type="evidence" value="ECO:0007669"/>
    <property type="project" value="UniProtKB-ARBA"/>
</dbReference>
<dbReference type="GO" id="GO:0003676">
    <property type="term" value="F:nucleic acid binding"/>
    <property type="evidence" value="ECO:0007669"/>
    <property type="project" value="InterPro"/>
</dbReference>
<dbReference type="GO" id="GO:0016740">
    <property type="term" value="F:transferase activity"/>
    <property type="evidence" value="ECO:0007669"/>
    <property type="project" value="UniProtKB-ARBA"/>
</dbReference>
<dbReference type="GO" id="GO:0006422">
    <property type="term" value="P:aspartyl-tRNA aminoacylation"/>
    <property type="evidence" value="ECO:0007669"/>
    <property type="project" value="UniProtKB-UniRule"/>
</dbReference>
<dbReference type="CDD" id="cd00777">
    <property type="entry name" value="AspRS_core"/>
    <property type="match status" value="1"/>
</dbReference>
<dbReference type="CDD" id="cd04317">
    <property type="entry name" value="EcAspRS_like_N"/>
    <property type="match status" value="1"/>
</dbReference>
<dbReference type="Gene3D" id="3.30.930.10">
    <property type="entry name" value="Bira Bifunctional Protein, Domain 2"/>
    <property type="match status" value="1"/>
</dbReference>
<dbReference type="Gene3D" id="3.30.1360.30">
    <property type="entry name" value="GAD-like domain"/>
    <property type="match status" value="1"/>
</dbReference>
<dbReference type="Gene3D" id="2.40.50.140">
    <property type="entry name" value="Nucleic acid-binding proteins"/>
    <property type="match status" value="1"/>
</dbReference>
<dbReference type="HAMAP" id="MF_00044">
    <property type="entry name" value="Asp_tRNA_synth_type1"/>
    <property type="match status" value="1"/>
</dbReference>
<dbReference type="InterPro" id="IPR004364">
    <property type="entry name" value="Aa-tRNA-synt_II"/>
</dbReference>
<dbReference type="InterPro" id="IPR006195">
    <property type="entry name" value="aa-tRNA-synth_II"/>
</dbReference>
<dbReference type="InterPro" id="IPR045864">
    <property type="entry name" value="aa-tRNA-synth_II/BPL/LPL"/>
</dbReference>
<dbReference type="InterPro" id="IPR004524">
    <property type="entry name" value="Asp-tRNA-ligase_1"/>
</dbReference>
<dbReference type="InterPro" id="IPR047089">
    <property type="entry name" value="Asp-tRNA-ligase_1_N"/>
</dbReference>
<dbReference type="InterPro" id="IPR002312">
    <property type="entry name" value="Asp/Asn-tRNA-synth_IIb"/>
</dbReference>
<dbReference type="InterPro" id="IPR047090">
    <property type="entry name" value="AspRS_core"/>
</dbReference>
<dbReference type="InterPro" id="IPR004115">
    <property type="entry name" value="GAD-like_sf"/>
</dbReference>
<dbReference type="InterPro" id="IPR029351">
    <property type="entry name" value="GAD_dom"/>
</dbReference>
<dbReference type="InterPro" id="IPR012340">
    <property type="entry name" value="NA-bd_OB-fold"/>
</dbReference>
<dbReference type="InterPro" id="IPR004365">
    <property type="entry name" value="NA-bd_OB_tRNA"/>
</dbReference>
<dbReference type="NCBIfam" id="TIGR00459">
    <property type="entry name" value="aspS_bact"/>
    <property type="match status" value="1"/>
</dbReference>
<dbReference type="NCBIfam" id="NF001750">
    <property type="entry name" value="PRK00476.1"/>
    <property type="match status" value="1"/>
</dbReference>
<dbReference type="PANTHER" id="PTHR22594:SF5">
    <property type="entry name" value="ASPARTATE--TRNA LIGASE, MITOCHONDRIAL"/>
    <property type="match status" value="1"/>
</dbReference>
<dbReference type="PANTHER" id="PTHR22594">
    <property type="entry name" value="ASPARTYL/LYSYL-TRNA SYNTHETASE"/>
    <property type="match status" value="1"/>
</dbReference>
<dbReference type="Pfam" id="PF02938">
    <property type="entry name" value="GAD"/>
    <property type="match status" value="1"/>
</dbReference>
<dbReference type="Pfam" id="PF00152">
    <property type="entry name" value="tRNA-synt_2"/>
    <property type="match status" value="1"/>
</dbReference>
<dbReference type="Pfam" id="PF01336">
    <property type="entry name" value="tRNA_anti-codon"/>
    <property type="match status" value="1"/>
</dbReference>
<dbReference type="PRINTS" id="PR01042">
    <property type="entry name" value="TRNASYNTHASP"/>
</dbReference>
<dbReference type="SUPFAM" id="SSF55681">
    <property type="entry name" value="Class II aaRS and biotin synthetases"/>
    <property type="match status" value="1"/>
</dbReference>
<dbReference type="SUPFAM" id="SSF55261">
    <property type="entry name" value="GAD domain-like"/>
    <property type="match status" value="1"/>
</dbReference>
<dbReference type="SUPFAM" id="SSF50249">
    <property type="entry name" value="Nucleic acid-binding proteins"/>
    <property type="match status" value="1"/>
</dbReference>
<dbReference type="PROSITE" id="PS50862">
    <property type="entry name" value="AA_TRNA_LIGASE_II"/>
    <property type="match status" value="1"/>
</dbReference>
<reference key="1">
    <citation type="journal article" date="2010" name="Genome Biol.">
        <title>Structure and dynamics of the pan-genome of Streptococcus pneumoniae and closely related species.</title>
        <authorList>
            <person name="Donati C."/>
            <person name="Hiller N.L."/>
            <person name="Tettelin H."/>
            <person name="Muzzi A."/>
            <person name="Croucher N.J."/>
            <person name="Angiuoli S.V."/>
            <person name="Oggioni M."/>
            <person name="Dunning Hotopp J.C."/>
            <person name="Hu F.Z."/>
            <person name="Riley D.R."/>
            <person name="Covacci A."/>
            <person name="Mitchell T.J."/>
            <person name="Bentley S.D."/>
            <person name="Kilian M."/>
            <person name="Ehrlich G.D."/>
            <person name="Rappuoli R."/>
            <person name="Moxon E.R."/>
            <person name="Masignani V."/>
        </authorList>
    </citation>
    <scope>NUCLEOTIDE SEQUENCE [LARGE SCALE GENOMIC DNA]</scope>
    <source>
        <strain>Taiwan19F-14</strain>
    </source>
</reference>
<feature type="chain" id="PRO_1000199017" description="Aspartate--tRNA ligase">
    <location>
        <begin position="1"/>
        <end position="587"/>
    </location>
</feature>
<feature type="region of interest" description="Aspartate" evidence="1">
    <location>
        <begin position="198"/>
        <end position="201"/>
    </location>
</feature>
<feature type="binding site" evidence="1">
    <location>
        <position position="174"/>
    </location>
    <ligand>
        <name>L-aspartate</name>
        <dbReference type="ChEBI" id="CHEBI:29991"/>
    </ligand>
</feature>
<feature type="binding site" evidence="1">
    <location>
        <begin position="220"/>
        <end position="222"/>
    </location>
    <ligand>
        <name>ATP</name>
        <dbReference type="ChEBI" id="CHEBI:30616"/>
    </ligand>
</feature>
<feature type="binding site" evidence="1">
    <location>
        <position position="220"/>
    </location>
    <ligand>
        <name>L-aspartate</name>
        <dbReference type="ChEBI" id="CHEBI:29991"/>
    </ligand>
</feature>
<feature type="binding site" evidence="1">
    <location>
        <position position="229"/>
    </location>
    <ligand>
        <name>ATP</name>
        <dbReference type="ChEBI" id="CHEBI:30616"/>
    </ligand>
</feature>
<feature type="binding site" evidence="1">
    <location>
        <position position="443"/>
    </location>
    <ligand>
        <name>L-aspartate</name>
        <dbReference type="ChEBI" id="CHEBI:29991"/>
    </ligand>
</feature>
<feature type="binding site" evidence="1">
    <location>
        <position position="477"/>
    </location>
    <ligand>
        <name>ATP</name>
        <dbReference type="ChEBI" id="CHEBI:30616"/>
    </ligand>
</feature>
<feature type="binding site" evidence="1">
    <location>
        <position position="484"/>
    </location>
    <ligand>
        <name>L-aspartate</name>
        <dbReference type="ChEBI" id="CHEBI:29991"/>
    </ligand>
</feature>
<feature type="binding site" evidence="1">
    <location>
        <begin position="529"/>
        <end position="532"/>
    </location>
    <ligand>
        <name>ATP</name>
        <dbReference type="ChEBI" id="CHEBI:30616"/>
    </ligand>
</feature>
<name>SYD_STRZT</name>
<accession>C1CU16</accession>
<keyword id="KW-0030">Aminoacyl-tRNA synthetase</keyword>
<keyword id="KW-0067">ATP-binding</keyword>
<keyword id="KW-0963">Cytoplasm</keyword>
<keyword id="KW-0436">Ligase</keyword>
<keyword id="KW-0547">Nucleotide-binding</keyword>
<keyword id="KW-0648">Protein biosynthesis</keyword>
<organism>
    <name type="scientific">Streptococcus pneumoniae (strain Taiwan19F-14)</name>
    <dbReference type="NCBI Taxonomy" id="487213"/>
    <lineage>
        <taxon>Bacteria</taxon>
        <taxon>Bacillati</taxon>
        <taxon>Bacillota</taxon>
        <taxon>Bacilli</taxon>
        <taxon>Lactobacillales</taxon>
        <taxon>Streptococcaceae</taxon>
        <taxon>Streptococcus</taxon>
    </lineage>
</organism>
<sequence length="587" mass="66149">MKRSMYAGRVREEHIGQEITLKGWVGRRRDLGGLIFIDLRDREGIMQLVINPEKVSAEVMATAESLRSEFVIEVTGQVAAREQANDKLPTGAVELNVTALIVLNTAKTTPFEIKDGIEANDDTRLRYRYLDLRRPEMLENLKLRAKVTHSIRNYLDELEFIDVETPFLSKSTPEGARDYLVPSRVNKGHFYALPQSPQITKQLLMNAGFDRYYQIVKCFRDEDLRGDRQPEFTQVDLETSFLTEQEIQDITEGLIARVMKETKGIEVTLPFPRVKYDDAMALYGSDKPDTRFDMLLQDLTEVVKGVDFKVFSEAPAVKAIVVKGAADNYSRKDIDKMTEVAKQYGAKGLAWVKVVDGELNGPVAKFLTGIQEELTTALALEDKDLVLFVADTLEVANATLGALRGRIAKELGLIDNDKFNFLWVVDWPMFEWSEEEGRYMSAHHPFTLPQEETAHELEGDLAKVRAIAYDIVLNGYELGGGSLRINQKDLQERMFKALGFSAEEANDQFGFLLEAMDYGFPPHGGLAIGLDRFVMLLAGEENIREVIAFPKNNKATDPMTQAPSTVALKQLEELSLQVEEDETSKTN</sequence>